<organism>
    <name type="scientific">Pseudomonas aeruginosa (strain LESB58)</name>
    <dbReference type="NCBI Taxonomy" id="557722"/>
    <lineage>
        <taxon>Bacteria</taxon>
        <taxon>Pseudomonadati</taxon>
        <taxon>Pseudomonadota</taxon>
        <taxon>Gammaproteobacteria</taxon>
        <taxon>Pseudomonadales</taxon>
        <taxon>Pseudomonadaceae</taxon>
        <taxon>Pseudomonas</taxon>
    </lineage>
</organism>
<name>HIS3_PSEA8</name>
<keyword id="KW-0028">Amino-acid biosynthesis</keyword>
<keyword id="KW-0963">Cytoplasm</keyword>
<keyword id="KW-0368">Histidine biosynthesis</keyword>
<keyword id="KW-0378">Hydrolase</keyword>
<keyword id="KW-0460">Magnesium</keyword>
<keyword id="KW-0479">Metal-binding</keyword>
<keyword id="KW-0862">Zinc</keyword>
<dbReference type="EC" id="3.5.4.19" evidence="1"/>
<dbReference type="EMBL" id="FM209186">
    <property type="protein sequence ID" value="CAW30210.1"/>
    <property type="molecule type" value="Genomic_DNA"/>
</dbReference>
<dbReference type="RefSeq" id="WP_003095888.1">
    <property type="nucleotide sequence ID" value="NC_011770.1"/>
</dbReference>
<dbReference type="SMR" id="B7V3F9"/>
<dbReference type="KEGG" id="pag:PLES_54561"/>
<dbReference type="HOGENOM" id="CLU_048577_5_0_6"/>
<dbReference type="UniPathway" id="UPA00031">
    <property type="reaction ID" value="UER00008"/>
</dbReference>
<dbReference type="GO" id="GO:0005737">
    <property type="term" value="C:cytoplasm"/>
    <property type="evidence" value="ECO:0007669"/>
    <property type="project" value="UniProtKB-SubCell"/>
</dbReference>
<dbReference type="GO" id="GO:0000287">
    <property type="term" value="F:magnesium ion binding"/>
    <property type="evidence" value="ECO:0007669"/>
    <property type="project" value="UniProtKB-UniRule"/>
</dbReference>
<dbReference type="GO" id="GO:0004635">
    <property type="term" value="F:phosphoribosyl-AMP cyclohydrolase activity"/>
    <property type="evidence" value="ECO:0007669"/>
    <property type="project" value="UniProtKB-UniRule"/>
</dbReference>
<dbReference type="GO" id="GO:0008270">
    <property type="term" value="F:zinc ion binding"/>
    <property type="evidence" value="ECO:0007669"/>
    <property type="project" value="UniProtKB-UniRule"/>
</dbReference>
<dbReference type="GO" id="GO:0000105">
    <property type="term" value="P:L-histidine biosynthetic process"/>
    <property type="evidence" value="ECO:0007669"/>
    <property type="project" value="UniProtKB-UniRule"/>
</dbReference>
<dbReference type="FunFam" id="3.10.20.810:FF:000001">
    <property type="entry name" value="Histidine biosynthesis bifunctional protein HisIE"/>
    <property type="match status" value="1"/>
</dbReference>
<dbReference type="Gene3D" id="3.10.20.810">
    <property type="entry name" value="Phosphoribosyl-AMP cyclohydrolase"/>
    <property type="match status" value="1"/>
</dbReference>
<dbReference type="HAMAP" id="MF_01021">
    <property type="entry name" value="HisI"/>
    <property type="match status" value="1"/>
</dbReference>
<dbReference type="InterPro" id="IPR026660">
    <property type="entry name" value="PRA-CH"/>
</dbReference>
<dbReference type="InterPro" id="IPR002496">
    <property type="entry name" value="PRib_AMP_CycHydrolase_dom"/>
</dbReference>
<dbReference type="InterPro" id="IPR038019">
    <property type="entry name" value="PRib_AMP_CycHydrolase_sf"/>
</dbReference>
<dbReference type="NCBIfam" id="NF000768">
    <property type="entry name" value="PRK00051.1"/>
    <property type="match status" value="1"/>
</dbReference>
<dbReference type="PANTHER" id="PTHR42945">
    <property type="entry name" value="HISTIDINE BIOSYNTHESIS BIFUNCTIONAL PROTEIN"/>
    <property type="match status" value="1"/>
</dbReference>
<dbReference type="PANTHER" id="PTHR42945:SF1">
    <property type="entry name" value="HISTIDINE BIOSYNTHESIS BIFUNCTIONAL PROTEIN HIS7"/>
    <property type="match status" value="1"/>
</dbReference>
<dbReference type="Pfam" id="PF01502">
    <property type="entry name" value="PRA-CH"/>
    <property type="match status" value="1"/>
</dbReference>
<dbReference type="SUPFAM" id="SSF141734">
    <property type="entry name" value="HisI-like"/>
    <property type="match status" value="1"/>
</dbReference>
<gene>
    <name evidence="1" type="primary">hisI</name>
    <name type="ordered locus">PLES_54561</name>
</gene>
<evidence type="ECO:0000255" key="1">
    <source>
        <dbReference type="HAMAP-Rule" id="MF_01021"/>
    </source>
</evidence>
<reference key="1">
    <citation type="journal article" date="2009" name="Genome Res.">
        <title>Newly introduced genomic prophage islands are critical determinants of in vivo competitiveness in the Liverpool epidemic strain of Pseudomonas aeruginosa.</title>
        <authorList>
            <person name="Winstanley C."/>
            <person name="Langille M.G.I."/>
            <person name="Fothergill J.L."/>
            <person name="Kukavica-Ibrulj I."/>
            <person name="Paradis-Bleau C."/>
            <person name="Sanschagrin F."/>
            <person name="Thomson N.R."/>
            <person name="Winsor G.L."/>
            <person name="Quail M.A."/>
            <person name="Lennard N."/>
            <person name="Bignell A."/>
            <person name="Clarke L."/>
            <person name="Seeger K."/>
            <person name="Saunders D."/>
            <person name="Harris D."/>
            <person name="Parkhill J."/>
            <person name="Hancock R.E.W."/>
            <person name="Brinkman F.S.L."/>
            <person name="Levesque R.C."/>
        </authorList>
    </citation>
    <scope>NUCLEOTIDE SEQUENCE [LARGE SCALE GENOMIC DNA]</scope>
    <source>
        <strain>LESB58</strain>
    </source>
</reference>
<accession>B7V3F9</accession>
<protein>
    <recommendedName>
        <fullName evidence="1">Phosphoribosyl-AMP cyclohydrolase</fullName>
        <shortName evidence="1">PRA-CH</shortName>
        <ecNumber evidence="1">3.5.4.19</ecNumber>
    </recommendedName>
</protein>
<sequence>MKDWLDEIHWNADGLVPAIAQDHETGRVLMMAWMNREALALTASENRAIYWSRSRGKLWRKGEESGHVQKLHELRLDCDADVVILMVEQVGGIACHTGRESCFYRVFENGAWKTVDPVLKDPDAIYEHAGHHHE</sequence>
<proteinExistence type="inferred from homology"/>
<comment type="function">
    <text evidence="1">Catalyzes the hydrolysis of the adenine ring of phosphoribosyl-AMP.</text>
</comment>
<comment type="catalytic activity">
    <reaction evidence="1">
        <text>1-(5-phospho-beta-D-ribosyl)-5'-AMP + H2O = 1-(5-phospho-beta-D-ribosyl)-5-[(5-phospho-beta-D-ribosylamino)methylideneamino]imidazole-4-carboxamide</text>
        <dbReference type="Rhea" id="RHEA:20049"/>
        <dbReference type="ChEBI" id="CHEBI:15377"/>
        <dbReference type="ChEBI" id="CHEBI:58435"/>
        <dbReference type="ChEBI" id="CHEBI:59457"/>
        <dbReference type="EC" id="3.5.4.19"/>
    </reaction>
</comment>
<comment type="cofactor">
    <cofactor evidence="1">
        <name>Mg(2+)</name>
        <dbReference type="ChEBI" id="CHEBI:18420"/>
    </cofactor>
    <text evidence="1">Binds 1 Mg(2+) ion per subunit.</text>
</comment>
<comment type="cofactor">
    <cofactor evidence="1">
        <name>Zn(2+)</name>
        <dbReference type="ChEBI" id="CHEBI:29105"/>
    </cofactor>
    <text evidence="1">Binds 1 zinc ion per subunit.</text>
</comment>
<comment type="pathway">
    <text evidence="1">Amino-acid biosynthesis; L-histidine biosynthesis; L-histidine from 5-phospho-alpha-D-ribose 1-diphosphate: step 3/9.</text>
</comment>
<comment type="subunit">
    <text evidence="1">Homodimer.</text>
</comment>
<comment type="subcellular location">
    <subcellularLocation>
        <location evidence="1">Cytoplasm</location>
    </subcellularLocation>
</comment>
<comment type="similarity">
    <text evidence="1">Belongs to the PRA-CH family.</text>
</comment>
<feature type="chain" id="PRO_1000135360" description="Phosphoribosyl-AMP cyclohydrolase">
    <location>
        <begin position="1"/>
        <end position="134"/>
    </location>
</feature>
<feature type="binding site" evidence="1">
    <location>
        <position position="77"/>
    </location>
    <ligand>
        <name>Mg(2+)</name>
        <dbReference type="ChEBI" id="CHEBI:18420"/>
    </ligand>
</feature>
<feature type="binding site" evidence="1">
    <location>
        <position position="78"/>
    </location>
    <ligand>
        <name>Zn(2+)</name>
        <dbReference type="ChEBI" id="CHEBI:29105"/>
        <note>ligand shared between dimeric partners</note>
    </ligand>
</feature>
<feature type="binding site" evidence="1">
    <location>
        <position position="79"/>
    </location>
    <ligand>
        <name>Mg(2+)</name>
        <dbReference type="ChEBI" id="CHEBI:18420"/>
    </ligand>
</feature>
<feature type="binding site" evidence="1">
    <location>
        <position position="81"/>
    </location>
    <ligand>
        <name>Mg(2+)</name>
        <dbReference type="ChEBI" id="CHEBI:18420"/>
    </ligand>
</feature>
<feature type="binding site" evidence="1">
    <location>
        <position position="95"/>
    </location>
    <ligand>
        <name>Zn(2+)</name>
        <dbReference type="ChEBI" id="CHEBI:29105"/>
        <note>ligand shared between dimeric partners</note>
    </ligand>
</feature>
<feature type="binding site" evidence="1">
    <location>
        <position position="102"/>
    </location>
    <ligand>
        <name>Zn(2+)</name>
        <dbReference type="ChEBI" id="CHEBI:29105"/>
        <note>ligand shared between dimeric partners</note>
    </ligand>
</feature>